<reference key="1">
    <citation type="journal article" date="2004" name="Proc. Natl. Acad. Sci. U.S.A.">
        <title>Genomic analysis of Bacteroides fragilis reveals extensive DNA inversions regulating cell surface adaptation.</title>
        <authorList>
            <person name="Kuwahara T."/>
            <person name="Yamashita A."/>
            <person name="Hirakawa H."/>
            <person name="Nakayama H."/>
            <person name="Toh H."/>
            <person name="Okada N."/>
            <person name="Kuhara S."/>
            <person name="Hattori M."/>
            <person name="Hayashi T."/>
            <person name="Ohnishi Y."/>
        </authorList>
    </citation>
    <scope>NUCLEOTIDE SEQUENCE [LARGE SCALE GENOMIC DNA]</scope>
    <source>
        <strain>YCH46</strain>
    </source>
</reference>
<proteinExistence type="inferred from homology"/>
<keyword id="KW-0963">Cytoplasm</keyword>
<keyword id="KW-0342">GTP-binding</keyword>
<keyword id="KW-0378">Hydrolase</keyword>
<keyword id="KW-0460">Magnesium</keyword>
<keyword id="KW-0479">Metal-binding</keyword>
<keyword id="KW-0547">Nucleotide-binding</keyword>
<keyword id="KW-0630">Potassium</keyword>
<keyword id="KW-0819">tRNA processing</keyword>
<protein>
    <recommendedName>
        <fullName evidence="1">tRNA modification GTPase MnmE</fullName>
        <ecNumber evidence="1">3.6.-.-</ecNumber>
    </recommendedName>
</protein>
<accession>Q64X55</accession>
<comment type="function">
    <text evidence="1">Exhibits a very high intrinsic GTPase hydrolysis rate. Involved in the addition of a carboxymethylaminomethyl (cmnm) group at the wobble position (U34) of certain tRNAs, forming tRNA-cmnm(5)s(2)U34.</text>
</comment>
<comment type="cofactor">
    <cofactor evidence="1">
        <name>K(+)</name>
        <dbReference type="ChEBI" id="CHEBI:29103"/>
    </cofactor>
    <text evidence="1">Binds 1 potassium ion per subunit.</text>
</comment>
<comment type="subunit">
    <text evidence="1">Homodimer. Heterotetramer of two MnmE and two MnmG subunits.</text>
</comment>
<comment type="subcellular location">
    <subcellularLocation>
        <location evidence="1">Cytoplasm</location>
    </subcellularLocation>
</comment>
<comment type="similarity">
    <text evidence="1">Belongs to the TRAFAC class TrmE-Era-EngA-EngB-Septin-like GTPase superfamily. TrmE GTPase family.</text>
</comment>
<feature type="chain" id="PRO_1000048801" description="tRNA modification GTPase MnmE">
    <location>
        <begin position="1"/>
        <end position="465"/>
    </location>
</feature>
<feature type="domain" description="TrmE-type G">
    <location>
        <begin position="220"/>
        <end position="387"/>
    </location>
</feature>
<feature type="binding site" evidence="1">
    <location>
        <position position="21"/>
    </location>
    <ligand>
        <name>(6S)-5-formyl-5,6,7,8-tetrahydrofolate</name>
        <dbReference type="ChEBI" id="CHEBI:57457"/>
    </ligand>
</feature>
<feature type="binding site" evidence="1">
    <location>
        <position position="85"/>
    </location>
    <ligand>
        <name>(6S)-5-formyl-5,6,7,8-tetrahydrofolate</name>
        <dbReference type="ChEBI" id="CHEBI:57457"/>
    </ligand>
</feature>
<feature type="binding site" evidence="1">
    <location>
        <position position="124"/>
    </location>
    <ligand>
        <name>(6S)-5-formyl-5,6,7,8-tetrahydrofolate</name>
        <dbReference type="ChEBI" id="CHEBI:57457"/>
    </ligand>
</feature>
<feature type="binding site" evidence="1">
    <location>
        <begin position="230"/>
        <end position="235"/>
    </location>
    <ligand>
        <name>GTP</name>
        <dbReference type="ChEBI" id="CHEBI:37565"/>
    </ligand>
</feature>
<feature type="binding site" evidence="1">
    <location>
        <position position="230"/>
    </location>
    <ligand>
        <name>K(+)</name>
        <dbReference type="ChEBI" id="CHEBI:29103"/>
    </ligand>
</feature>
<feature type="binding site" evidence="1">
    <location>
        <position position="234"/>
    </location>
    <ligand>
        <name>Mg(2+)</name>
        <dbReference type="ChEBI" id="CHEBI:18420"/>
    </ligand>
</feature>
<feature type="binding site" evidence="1">
    <location>
        <begin position="249"/>
        <end position="255"/>
    </location>
    <ligand>
        <name>GTP</name>
        <dbReference type="ChEBI" id="CHEBI:37565"/>
    </ligand>
</feature>
<feature type="binding site" evidence="1">
    <location>
        <position position="249"/>
    </location>
    <ligand>
        <name>K(+)</name>
        <dbReference type="ChEBI" id="CHEBI:29103"/>
    </ligand>
</feature>
<feature type="binding site" evidence="1">
    <location>
        <position position="251"/>
    </location>
    <ligand>
        <name>K(+)</name>
        <dbReference type="ChEBI" id="CHEBI:29103"/>
    </ligand>
</feature>
<feature type="binding site" evidence="1">
    <location>
        <position position="254"/>
    </location>
    <ligand>
        <name>K(+)</name>
        <dbReference type="ChEBI" id="CHEBI:29103"/>
    </ligand>
</feature>
<feature type="binding site" evidence="1">
    <location>
        <position position="255"/>
    </location>
    <ligand>
        <name>Mg(2+)</name>
        <dbReference type="ChEBI" id="CHEBI:18420"/>
    </ligand>
</feature>
<feature type="binding site" evidence="1">
    <location>
        <begin position="274"/>
        <end position="277"/>
    </location>
    <ligand>
        <name>GTP</name>
        <dbReference type="ChEBI" id="CHEBI:37565"/>
    </ligand>
</feature>
<feature type="binding site" evidence="1">
    <location>
        <position position="465"/>
    </location>
    <ligand>
        <name>(6S)-5-formyl-5,6,7,8-tetrahydrofolate</name>
        <dbReference type="ChEBI" id="CHEBI:57457"/>
    </ligand>
</feature>
<sequence>MNQDTICAIATAQGGAIGSIRVSGPEAITITGRIFTPAKSGKLLSEQKPYTLTFGRIYNGEEMIDEVLVSLFRAPHSYTGEDSTEITCHGSSYILQQVMQLLIKNGCRMAQPGEYTQRAFLNGKMDLSQAEAVADLIASSSAATHRLALSQMRGGFSKELTTLREKLLNFTSMIELELDFSEEDVEFADRSALRRLADEIEEVIARLANSFSVGNVIKNGVPVAIIGETNAGKSTLLNVLLNEDKAIVSDIHGTTRDVIEDTVNIGGITFRFIDTAGIRETSDTIESLGIERTFQKLDQAEIVLWMIDSADAISQLTLLSDKILPRCEHKQLILVFNKVELINETQKNELASQFSEHIGSEIESIFISAKQRLHTDELQQRLVAAAHLPTVTQNDVIVTNIRHYEALTRALDAIHRVQEGLDANISGDFLSQDIRECIFHLSDIAGEVTNDMVLQNIFAHFCIGK</sequence>
<evidence type="ECO:0000255" key="1">
    <source>
        <dbReference type="HAMAP-Rule" id="MF_00379"/>
    </source>
</evidence>
<dbReference type="EC" id="3.6.-.-" evidence="1"/>
<dbReference type="EMBL" id="AP006841">
    <property type="protein sequence ID" value="BAD47921.1"/>
    <property type="molecule type" value="Genomic_DNA"/>
</dbReference>
<dbReference type="RefSeq" id="WP_011202306.1">
    <property type="nucleotide sequence ID" value="NC_006347.1"/>
</dbReference>
<dbReference type="RefSeq" id="YP_098455.1">
    <property type="nucleotide sequence ID" value="NC_006347.1"/>
</dbReference>
<dbReference type="SMR" id="Q64X55"/>
<dbReference type="STRING" id="295405.BF1171"/>
<dbReference type="KEGG" id="bfr:BF1171"/>
<dbReference type="PATRIC" id="fig|295405.11.peg.1157"/>
<dbReference type="HOGENOM" id="CLU_019624_4_1_10"/>
<dbReference type="OrthoDB" id="9805918at2"/>
<dbReference type="Proteomes" id="UP000002197">
    <property type="component" value="Chromosome"/>
</dbReference>
<dbReference type="GO" id="GO:0005829">
    <property type="term" value="C:cytosol"/>
    <property type="evidence" value="ECO:0007669"/>
    <property type="project" value="TreeGrafter"/>
</dbReference>
<dbReference type="GO" id="GO:0005525">
    <property type="term" value="F:GTP binding"/>
    <property type="evidence" value="ECO:0007669"/>
    <property type="project" value="UniProtKB-UniRule"/>
</dbReference>
<dbReference type="GO" id="GO:0003924">
    <property type="term" value="F:GTPase activity"/>
    <property type="evidence" value="ECO:0007669"/>
    <property type="project" value="UniProtKB-UniRule"/>
</dbReference>
<dbReference type="GO" id="GO:0046872">
    <property type="term" value="F:metal ion binding"/>
    <property type="evidence" value="ECO:0007669"/>
    <property type="project" value="UniProtKB-KW"/>
</dbReference>
<dbReference type="GO" id="GO:0030488">
    <property type="term" value="P:tRNA methylation"/>
    <property type="evidence" value="ECO:0007669"/>
    <property type="project" value="TreeGrafter"/>
</dbReference>
<dbReference type="GO" id="GO:0002098">
    <property type="term" value="P:tRNA wobble uridine modification"/>
    <property type="evidence" value="ECO:0007669"/>
    <property type="project" value="TreeGrafter"/>
</dbReference>
<dbReference type="CDD" id="cd04164">
    <property type="entry name" value="trmE"/>
    <property type="match status" value="1"/>
</dbReference>
<dbReference type="CDD" id="cd14858">
    <property type="entry name" value="TrmE_N"/>
    <property type="match status" value="1"/>
</dbReference>
<dbReference type="FunFam" id="3.30.1360.120:FF:000003">
    <property type="entry name" value="tRNA modification GTPase MnmE"/>
    <property type="match status" value="1"/>
</dbReference>
<dbReference type="FunFam" id="3.40.50.300:FF:001376">
    <property type="entry name" value="tRNA modification GTPase MnmE"/>
    <property type="match status" value="1"/>
</dbReference>
<dbReference type="Gene3D" id="3.40.50.300">
    <property type="entry name" value="P-loop containing nucleotide triphosphate hydrolases"/>
    <property type="match status" value="1"/>
</dbReference>
<dbReference type="Gene3D" id="3.30.1360.120">
    <property type="entry name" value="Probable tRNA modification gtpase trme, domain 1"/>
    <property type="match status" value="1"/>
</dbReference>
<dbReference type="Gene3D" id="1.20.120.430">
    <property type="entry name" value="tRNA modification GTPase MnmE domain 2"/>
    <property type="match status" value="1"/>
</dbReference>
<dbReference type="HAMAP" id="MF_00379">
    <property type="entry name" value="GTPase_MnmE"/>
    <property type="match status" value="1"/>
</dbReference>
<dbReference type="InterPro" id="IPR031168">
    <property type="entry name" value="G_TrmE"/>
</dbReference>
<dbReference type="InterPro" id="IPR006073">
    <property type="entry name" value="GTP-bd"/>
</dbReference>
<dbReference type="InterPro" id="IPR018948">
    <property type="entry name" value="GTP-bd_TrmE_N"/>
</dbReference>
<dbReference type="InterPro" id="IPR004520">
    <property type="entry name" value="GTPase_MnmE"/>
</dbReference>
<dbReference type="InterPro" id="IPR027368">
    <property type="entry name" value="MnmE_dom2"/>
</dbReference>
<dbReference type="InterPro" id="IPR025867">
    <property type="entry name" value="MnmE_helical"/>
</dbReference>
<dbReference type="InterPro" id="IPR027417">
    <property type="entry name" value="P-loop_NTPase"/>
</dbReference>
<dbReference type="InterPro" id="IPR005225">
    <property type="entry name" value="Small_GTP-bd"/>
</dbReference>
<dbReference type="InterPro" id="IPR027266">
    <property type="entry name" value="TrmE/GcvT_dom1"/>
</dbReference>
<dbReference type="NCBIfam" id="TIGR00450">
    <property type="entry name" value="mnmE_trmE_thdF"/>
    <property type="match status" value="1"/>
</dbReference>
<dbReference type="NCBIfam" id="TIGR00231">
    <property type="entry name" value="small_GTP"/>
    <property type="match status" value="1"/>
</dbReference>
<dbReference type="PANTHER" id="PTHR42714">
    <property type="entry name" value="TRNA MODIFICATION GTPASE GTPBP3"/>
    <property type="match status" value="1"/>
</dbReference>
<dbReference type="PANTHER" id="PTHR42714:SF2">
    <property type="entry name" value="TRNA MODIFICATION GTPASE GTPBP3, MITOCHONDRIAL"/>
    <property type="match status" value="1"/>
</dbReference>
<dbReference type="Pfam" id="PF01926">
    <property type="entry name" value="MMR_HSR1"/>
    <property type="match status" value="1"/>
</dbReference>
<dbReference type="Pfam" id="PF12631">
    <property type="entry name" value="MnmE_helical"/>
    <property type="match status" value="1"/>
</dbReference>
<dbReference type="Pfam" id="PF10396">
    <property type="entry name" value="TrmE_N"/>
    <property type="match status" value="1"/>
</dbReference>
<dbReference type="SUPFAM" id="SSF52540">
    <property type="entry name" value="P-loop containing nucleoside triphosphate hydrolases"/>
    <property type="match status" value="1"/>
</dbReference>
<dbReference type="PROSITE" id="PS51709">
    <property type="entry name" value="G_TRME"/>
    <property type="match status" value="1"/>
</dbReference>
<gene>
    <name evidence="1" type="primary">mnmE</name>
    <name evidence="1" type="synonym">trmE</name>
    <name type="ordered locus">BF1171</name>
</gene>
<organism>
    <name type="scientific">Bacteroides fragilis (strain YCH46)</name>
    <dbReference type="NCBI Taxonomy" id="295405"/>
    <lineage>
        <taxon>Bacteria</taxon>
        <taxon>Pseudomonadati</taxon>
        <taxon>Bacteroidota</taxon>
        <taxon>Bacteroidia</taxon>
        <taxon>Bacteroidales</taxon>
        <taxon>Bacteroidaceae</taxon>
        <taxon>Bacteroides</taxon>
    </lineage>
</organism>
<name>MNME_BACFR</name>